<dbReference type="EC" id="1.2.1.38" evidence="1"/>
<dbReference type="EMBL" id="CP000768">
    <property type="protein sequence ID" value="ABS44104.1"/>
    <property type="molecule type" value="Genomic_DNA"/>
</dbReference>
<dbReference type="SMR" id="A7H1S3"/>
<dbReference type="KEGG" id="cjd:JJD26997_0222"/>
<dbReference type="HOGENOM" id="CLU_006384_0_1_7"/>
<dbReference type="UniPathway" id="UPA00068">
    <property type="reaction ID" value="UER00108"/>
</dbReference>
<dbReference type="Proteomes" id="UP000002302">
    <property type="component" value="Chromosome"/>
</dbReference>
<dbReference type="GO" id="GO:0005737">
    <property type="term" value="C:cytoplasm"/>
    <property type="evidence" value="ECO:0007669"/>
    <property type="project" value="UniProtKB-SubCell"/>
</dbReference>
<dbReference type="GO" id="GO:0003942">
    <property type="term" value="F:N-acetyl-gamma-glutamyl-phosphate reductase activity"/>
    <property type="evidence" value="ECO:0007669"/>
    <property type="project" value="UniProtKB-UniRule"/>
</dbReference>
<dbReference type="GO" id="GO:0051287">
    <property type="term" value="F:NAD binding"/>
    <property type="evidence" value="ECO:0007669"/>
    <property type="project" value="InterPro"/>
</dbReference>
<dbReference type="GO" id="GO:0070401">
    <property type="term" value="F:NADP+ binding"/>
    <property type="evidence" value="ECO:0007669"/>
    <property type="project" value="InterPro"/>
</dbReference>
<dbReference type="GO" id="GO:0006526">
    <property type="term" value="P:L-arginine biosynthetic process"/>
    <property type="evidence" value="ECO:0007669"/>
    <property type="project" value="UniProtKB-UniRule"/>
</dbReference>
<dbReference type="CDD" id="cd23934">
    <property type="entry name" value="AGPR_1_C"/>
    <property type="match status" value="1"/>
</dbReference>
<dbReference type="CDD" id="cd17895">
    <property type="entry name" value="AGPR_1_N"/>
    <property type="match status" value="1"/>
</dbReference>
<dbReference type="FunFam" id="3.30.360.10:FF:000014">
    <property type="entry name" value="N-acetyl-gamma-glutamyl-phosphate reductase"/>
    <property type="match status" value="1"/>
</dbReference>
<dbReference type="Gene3D" id="3.30.360.10">
    <property type="entry name" value="Dihydrodipicolinate Reductase, domain 2"/>
    <property type="match status" value="1"/>
</dbReference>
<dbReference type="Gene3D" id="3.40.50.720">
    <property type="entry name" value="NAD(P)-binding Rossmann-like Domain"/>
    <property type="match status" value="1"/>
</dbReference>
<dbReference type="HAMAP" id="MF_00150">
    <property type="entry name" value="ArgC_type1"/>
    <property type="match status" value="1"/>
</dbReference>
<dbReference type="InterPro" id="IPR023013">
    <property type="entry name" value="AGPR_AS"/>
</dbReference>
<dbReference type="InterPro" id="IPR000706">
    <property type="entry name" value="AGPR_type-1"/>
</dbReference>
<dbReference type="InterPro" id="IPR036291">
    <property type="entry name" value="NAD(P)-bd_dom_sf"/>
</dbReference>
<dbReference type="InterPro" id="IPR050085">
    <property type="entry name" value="NAGSA_dehydrogenase"/>
</dbReference>
<dbReference type="InterPro" id="IPR000534">
    <property type="entry name" value="Semialdehyde_DH_NAD-bd"/>
</dbReference>
<dbReference type="NCBIfam" id="TIGR01850">
    <property type="entry name" value="argC"/>
    <property type="match status" value="1"/>
</dbReference>
<dbReference type="PANTHER" id="PTHR32338:SF10">
    <property type="entry name" value="N-ACETYL-GAMMA-GLUTAMYL-PHOSPHATE REDUCTASE, CHLOROPLASTIC-RELATED"/>
    <property type="match status" value="1"/>
</dbReference>
<dbReference type="PANTHER" id="PTHR32338">
    <property type="entry name" value="N-ACETYL-GAMMA-GLUTAMYL-PHOSPHATE REDUCTASE, CHLOROPLASTIC-RELATED-RELATED"/>
    <property type="match status" value="1"/>
</dbReference>
<dbReference type="Pfam" id="PF01118">
    <property type="entry name" value="Semialdhyde_dh"/>
    <property type="match status" value="1"/>
</dbReference>
<dbReference type="Pfam" id="PF22698">
    <property type="entry name" value="Semialdhyde_dhC_1"/>
    <property type="match status" value="1"/>
</dbReference>
<dbReference type="SMART" id="SM00859">
    <property type="entry name" value="Semialdhyde_dh"/>
    <property type="match status" value="1"/>
</dbReference>
<dbReference type="SUPFAM" id="SSF55347">
    <property type="entry name" value="Glyceraldehyde-3-phosphate dehydrogenase-like, C-terminal domain"/>
    <property type="match status" value="1"/>
</dbReference>
<dbReference type="SUPFAM" id="SSF51735">
    <property type="entry name" value="NAD(P)-binding Rossmann-fold domains"/>
    <property type="match status" value="1"/>
</dbReference>
<dbReference type="PROSITE" id="PS01224">
    <property type="entry name" value="ARGC"/>
    <property type="match status" value="1"/>
</dbReference>
<sequence length="342" mass="38897">MKIKVGILGASGYAGNELVRILLNHPKVEISYLGSSSSVGQNYQDLYPDTPLNLCFENKNLDELELDLLFLATPHEFSAKLLNENLLKKMKIIDLSADFRLKNPKDYELWYKFTHPNQELLQNAIYGLCELYKEEIKKASLVANPGCYTTCSILSLYPLFKEKIIDFNSVIIDAKSGVSGAGRSAKVENLFCEVNENIKAYGLASHRHTPEIEEHLSYVAKEKITLQFTPHLVPMQRGILISAYANLKENLQEQDIRDIYTKYYQNNKFIRLLPPQSLPQTRWVKSSNFADINFSIDQRTKRVIVLGAIDNLIKGAAGQAVQNMNLMFDFDEDEGLKFFANL</sequence>
<comment type="function">
    <text evidence="1">Catalyzes the NADPH-dependent reduction of N-acetyl-5-glutamyl phosphate to yield N-acetyl-L-glutamate 5-semialdehyde.</text>
</comment>
<comment type="catalytic activity">
    <reaction evidence="1">
        <text>N-acetyl-L-glutamate 5-semialdehyde + phosphate + NADP(+) = N-acetyl-L-glutamyl 5-phosphate + NADPH + H(+)</text>
        <dbReference type="Rhea" id="RHEA:21588"/>
        <dbReference type="ChEBI" id="CHEBI:15378"/>
        <dbReference type="ChEBI" id="CHEBI:29123"/>
        <dbReference type="ChEBI" id="CHEBI:43474"/>
        <dbReference type="ChEBI" id="CHEBI:57783"/>
        <dbReference type="ChEBI" id="CHEBI:57936"/>
        <dbReference type="ChEBI" id="CHEBI:58349"/>
        <dbReference type="EC" id="1.2.1.38"/>
    </reaction>
</comment>
<comment type="pathway">
    <text evidence="1">Amino-acid biosynthesis; L-arginine biosynthesis; N(2)-acetyl-L-ornithine from L-glutamate: step 3/4.</text>
</comment>
<comment type="subcellular location">
    <subcellularLocation>
        <location evidence="1">Cytoplasm</location>
    </subcellularLocation>
</comment>
<comment type="similarity">
    <text evidence="1">Belongs to the NAGSA dehydrogenase family. Type 1 subfamily.</text>
</comment>
<feature type="chain" id="PRO_1000010985" description="N-acetyl-gamma-glutamyl-phosphate reductase">
    <location>
        <begin position="1"/>
        <end position="342"/>
    </location>
</feature>
<feature type="active site" evidence="1">
    <location>
        <position position="147"/>
    </location>
</feature>
<proteinExistence type="inferred from homology"/>
<gene>
    <name evidence="1" type="primary">argC</name>
    <name type="ordered locus">JJD26997_0222</name>
</gene>
<reference key="1">
    <citation type="submission" date="2007-07" db="EMBL/GenBank/DDBJ databases">
        <title>Complete genome sequence of Campylobacter jejuni subsp doylei 269.97 isolated from human blood.</title>
        <authorList>
            <person name="Fouts D.E."/>
            <person name="Mongodin E.F."/>
            <person name="Puiu D."/>
            <person name="Sebastian Y."/>
            <person name="Miller W.G."/>
            <person name="Mandrell R.E."/>
            <person name="Lastovica A.J."/>
            <person name="Nelson K.E."/>
        </authorList>
    </citation>
    <scope>NUCLEOTIDE SEQUENCE [LARGE SCALE GENOMIC DNA]</scope>
    <source>
        <strain>ATCC BAA-1458 / RM4099 / 269.97</strain>
    </source>
</reference>
<keyword id="KW-0028">Amino-acid biosynthesis</keyword>
<keyword id="KW-0055">Arginine biosynthesis</keyword>
<keyword id="KW-0963">Cytoplasm</keyword>
<keyword id="KW-0521">NADP</keyword>
<keyword id="KW-0560">Oxidoreductase</keyword>
<accession>A7H1S3</accession>
<evidence type="ECO:0000255" key="1">
    <source>
        <dbReference type="HAMAP-Rule" id="MF_00150"/>
    </source>
</evidence>
<name>ARGC_CAMJD</name>
<organism>
    <name type="scientific">Campylobacter jejuni subsp. doylei (strain ATCC BAA-1458 / RM4099 / 269.97)</name>
    <dbReference type="NCBI Taxonomy" id="360109"/>
    <lineage>
        <taxon>Bacteria</taxon>
        <taxon>Pseudomonadati</taxon>
        <taxon>Campylobacterota</taxon>
        <taxon>Epsilonproteobacteria</taxon>
        <taxon>Campylobacterales</taxon>
        <taxon>Campylobacteraceae</taxon>
        <taxon>Campylobacter</taxon>
    </lineage>
</organism>
<protein>
    <recommendedName>
        <fullName evidence="1">N-acetyl-gamma-glutamyl-phosphate reductase</fullName>
        <shortName evidence="1">AGPR</shortName>
        <ecNumber evidence="1">1.2.1.38</ecNumber>
    </recommendedName>
    <alternativeName>
        <fullName evidence="1">N-acetyl-glutamate semialdehyde dehydrogenase</fullName>
        <shortName evidence="1">NAGSA dehydrogenase</shortName>
    </alternativeName>
</protein>